<accession>O75840</accession>
<accession>B2RB03</accession>
<accession>B7Z4F7</accession>
<accession>C9JF04</accession>
<accession>E7EWH1</accession>
<accession>L0R4P2</accession>
<accession>Q7Z3H8</accession>
<accession>Q96E51</accession>
<protein>
    <recommendedName>
        <fullName>Krueppel-like factor 7</fullName>
    </recommendedName>
    <alternativeName>
        <fullName evidence="13">Ubiquitous krueppel-like factor</fullName>
    </alternativeName>
</protein>
<gene>
    <name evidence="15" type="primary">KLF7</name>
    <name evidence="13" type="synonym">UKLF</name>
</gene>
<evidence type="ECO:0000250" key="1">
    <source>
        <dbReference type="UniProtKB" id="Q99JB0"/>
    </source>
</evidence>
<evidence type="ECO:0000255" key="2"/>
<evidence type="ECO:0000255" key="3">
    <source>
        <dbReference type="PROSITE-ProRule" id="PRU00042"/>
    </source>
</evidence>
<evidence type="ECO:0000269" key="4">
    <source>
    </source>
</evidence>
<evidence type="ECO:0000269" key="5">
    <source>
    </source>
</evidence>
<evidence type="ECO:0000269" key="6">
    <source>
    </source>
</evidence>
<evidence type="ECO:0000269" key="7">
    <source>
    </source>
</evidence>
<evidence type="ECO:0000269" key="8">
    <source>
    </source>
</evidence>
<evidence type="ECO:0000303" key="9">
    <source>
    </source>
</evidence>
<evidence type="ECO:0000303" key="10">
    <source>
    </source>
</evidence>
<evidence type="ECO:0000303" key="11">
    <source>
    </source>
</evidence>
<evidence type="ECO:0000303" key="12">
    <source>
    </source>
</evidence>
<evidence type="ECO:0000303" key="13">
    <source>
    </source>
</evidence>
<evidence type="ECO:0000305" key="14"/>
<evidence type="ECO:0000312" key="15">
    <source>
        <dbReference type="HGNC" id="HGNC:6350"/>
    </source>
</evidence>
<comment type="function">
    <text evidence="1 4 5 8">Transcriptional factor (PubMed:16339272, PubMed:9774444). Plays a critical role in neuronal morphogenesis and survival of sensory neurons (By similarity). Represses the corneal epithelium differentiation (PubMed:28916725). Also acts as a metabolic regulator, by modulating insulin sensitivity in pancreatic beta cells and skeletal muscle cells (PubMed:16339272). Inhibits transcriptional inducers of adipogenesis and has a repressive role in the expression of several adipokines, including leptin (PubMed:16339272).</text>
</comment>
<comment type="subunit">
    <text evidence="1">Interacts with FBXO38.</text>
</comment>
<comment type="subcellular location">
    <subcellularLocation>
        <location evidence="8">Nucleus</location>
    </subcellularLocation>
</comment>
<comment type="alternative products">
    <event type="alternative splicing"/>
    <isoform>
        <id>O75840-1</id>
        <name>1</name>
        <sequence type="displayed"/>
    </isoform>
    <isoform>
        <id>O75840-2</id>
        <name>2</name>
        <sequence type="described" ref="VSP_047030"/>
    </isoform>
    <isoform>
        <id>O75840-3</id>
        <name>3</name>
        <sequence type="described" ref="VSP_047032"/>
    </isoform>
    <isoform>
        <id>O75840-4</id>
        <name>4</name>
        <sequence type="described" ref="VSP_047031"/>
    </isoform>
    <isoform>
        <id>O75840-5</id>
        <name>5</name>
        <sequence type="described" ref="VSP_047478"/>
    </isoform>
    <isoform>
        <id>O75840-6</id>
        <name>6</name>
        <sequence type="described" ref="VSP_047477 VSP_047479"/>
    </isoform>
</comment>
<comment type="tissue specificity">
    <text evidence="4 8">Widely expressed.</text>
</comment>
<comment type="domain">
    <text evidence="8">The acidic N-terminal part may favor interaction with the basic domain of transcription factors.</text>
</comment>
<comment type="domain">
    <text evidence="7">The 9aaTAD motif is a transactivation domain present in a large number of yeast and animal transcription factors. In KLF7, the motif is inactive.</text>
</comment>
<comment type="similarity">
    <text evidence="14">Belongs to the krueppel C2H2-type zinc-finger protein family.</text>
</comment>
<sequence>MDVLASYSIFQELQLVHDTGYFSALPSLEETWQQTCLELERYLQTEPRRISETFGEDLDCFLHASPPPCIEESFRRLDPLLLPVEAAICEKSSAVDILLSRDKLLSETCLSLQPASSSLDSYTAVNQAQLNAVTSLTPPSSPELSRHLVKTSQTLSAVDGTVTLKLVAKKAALSSVKVGGVATAAAAVTAAGAVKSGQSDSDQGGLGAEACPENKKRVHRCQFNGCRKVYTKSSHLKAHQRTHTGEKPYKCSWEGCEWRFARSDELTRHYRKHTGAKPFKCNHCDRCFSRSDHLALHMKRHI</sequence>
<dbReference type="EMBL" id="AB015132">
    <property type="protein sequence ID" value="BAA33521.1"/>
    <property type="molecule type" value="mRNA"/>
</dbReference>
<dbReference type="EMBL" id="HF546205">
    <property type="protein sequence ID" value="CCO02791.1"/>
    <property type="molecule type" value="mRNA"/>
</dbReference>
<dbReference type="EMBL" id="HF546206">
    <property type="protein sequence ID" value="CCO02792.1"/>
    <property type="molecule type" value="mRNA"/>
</dbReference>
<dbReference type="EMBL" id="BX537890">
    <property type="protein sequence ID" value="CAD97885.1"/>
    <property type="molecule type" value="mRNA"/>
</dbReference>
<dbReference type="EMBL" id="CR542112">
    <property type="protein sequence ID" value="CAG46909.1"/>
    <property type="molecule type" value="mRNA"/>
</dbReference>
<dbReference type="EMBL" id="AK297312">
    <property type="protein sequence ID" value="BAH12543.1"/>
    <property type="molecule type" value="mRNA"/>
</dbReference>
<dbReference type="EMBL" id="AK314439">
    <property type="protein sequence ID" value="BAG37050.1"/>
    <property type="molecule type" value="mRNA"/>
</dbReference>
<dbReference type="EMBL" id="AC007879">
    <property type="status" value="NOT_ANNOTATED_CDS"/>
    <property type="molecule type" value="Genomic_DNA"/>
</dbReference>
<dbReference type="EMBL" id="AC008062">
    <property type="status" value="NOT_ANNOTATED_CDS"/>
    <property type="molecule type" value="Genomic_DNA"/>
</dbReference>
<dbReference type="EMBL" id="CH471063">
    <property type="protein sequence ID" value="EAW70400.1"/>
    <property type="molecule type" value="Genomic_DNA"/>
</dbReference>
<dbReference type="EMBL" id="CH471063">
    <property type="protein sequence ID" value="EAW70402.1"/>
    <property type="molecule type" value="Genomic_DNA"/>
</dbReference>
<dbReference type="EMBL" id="CH471063">
    <property type="protein sequence ID" value="EAW70403.1"/>
    <property type="molecule type" value="Genomic_DNA"/>
</dbReference>
<dbReference type="EMBL" id="BC012919">
    <property type="protein sequence ID" value="AAH12919.1"/>
    <property type="molecule type" value="mRNA"/>
</dbReference>
<dbReference type="CCDS" id="CCDS2373.1">
    <molecule id="O75840-1"/>
</dbReference>
<dbReference type="CCDS" id="CCDS59438.1">
    <molecule id="O75840-4"/>
</dbReference>
<dbReference type="CCDS" id="CCDS59439.1">
    <molecule id="O75840-3"/>
</dbReference>
<dbReference type="CCDS" id="CCDS59440.1">
    <molecule id="O75840-2"/>
</dbReference>
<dbReference type="RefSeq" id="NP_001257871.1">
    <molecule id="O75840-3"/>
    <property type="nucleotide sequence ID" value="NM_001270942.1"/>
</dbReference>
<dbReference type="RefSeq" id="NP_001257872.1">
    <molecule id="O75840-2"/>
    <property type="nucleotide sequence ID" value="NM_001270943.2"/>
</dbReference>
<dbReference type="RefSeq" id="NP_001257873.1">
    <molecule id="O75840-4"/>
    <property type="nucleotide sequence ID" value="NM_001270944.2"/>
</dbReference>
<dbReference type="RefSeq" id="NP_003700.1">
    <molecule id="O75840-1"/>
    <property type="nucleotide sequence ID" value="NM_003709.4"/>
</dbReference>
<dbReference type="RefSeq" id="XP_016860650.1">
    <molecule id="O75840-1"/>
    <property type="nucleotide sequence ID" value="XM_017005161.2"/>
</dbReference>
<dbReference type="RefSeq" id="XP_016860653.1">
    <molecule id="O75840-3"/>
    <property type="nucleotide sequence ID" value="XM_017005164.3"/>
</dbReference>
<dbReference type="RefSeq" id="XP_047302100.1">
    <molecule id="O75840-1"/>
    <property type="nucleotide sequence ID" value="XM_047446144.1"/>
</dbReference>
<dbReference type="RefSeq" id="XP_047302101.1">
    <molecule id="O75840-1"/>
    <property type="nucleotide sequence ID" value="XM_047446145.1"/>
</dbReference>
<dbReference type="RefSeq" id="XP_047302102.1">
    <molecule id="O75840-1"/>
    <property type="nucleotide sequence ID" value="XM_047446146.1"/>
</dbReference>
<dbReference type="RefSeq" id="XP_047302103.1">
    <molecule id="O75840-1"/>
    <property type="nucleotide sequence ID" value="XM_047446147.1"/>
</dbReference>
<dbReference type="RefSeq" id="XP_047302105.1">
    <molecule id="O75840-2"/>
    <property type="nucleotide sequence ID" value="XM_047446149.1"/>
</dbReference>
<dbReference type="RefSeq" id="XP_054200283.1">
    <molecule id="O75840-1"/>
    <property type="nucleotide sequence ID" value="XM_054344308.1"/>
</dbReference>
<dbReference type="RefSeq" id="XP_054200284.1">
    <molecule id="O75840-1"/>
    <property type="nucleotide sequence ID" value="XM_054344309.1"/>
</dbReference>
<dbReference type="RefSeq" id="XP_054200285.1">
    <molecule id="O75840-1"/>
    <property type="nucleotide sequence ID" value="XM_054344310.1"/>
</dbReference>
<dbReference type="RefSeq" id="XP_054200286.1">
    <molecule id="O75840-1"/>
    <property type="nucleotide sequence ID" value="XM_054344311.1"/>
</dbReference>
<dbReference type="RefSeq" id="XP_054200288.1">
    <molecule id="O75840-2"/>
    <property type="nucleotide sequence ID" value="XM_054344313.1"/>
</dbReference>
<dbReference type="RefSeq" id="XP_054200291.1">
    <molecule id="O75840-3"/>
    <property type="nucleotide sequence ID" value="XM_054344316.1"/>
</dbReference>
<dbReference type="SMR" id="O75840"/>
<dbReference type="BioGRID" id="114168">
    <property type="interactions" value="5"/>
</dbReference>
<dbReference type="FunCoup" id="O75840">
    <property type="interactions" value="1388"/>
</dbReference>
<dbReference type="STRING" id="9606.ENSP00000309570"/>
<dbReference type="GlyGen" id="O75840">
    <property type="glycosylation" value="2 sites, 1 O-linked glycan (1 site)"/>
</dbReference>
<dbReference type="iPTMnet" id="O75840"/>
<dbReference type="PhosphoSitePlus" id="O75840"/>
<dbReference type="BioMuta" id="KLF7"/>
<dbReference type="jPOST" id="O75840"/>
<dbReference type="MassIVE" id="O75840"/>
<dbReference type="PaxDb" id="9606-ENSP00000309570"/>
<dbReference type="PeptideAtlas" id="O75840"/>
<dbReference type="ProteomicsDB" id="18843"/>
<dbReference type="ProteomicsDB" id="50223">
    <molecule id="O75840-1"/>
</dbReference>
<dbReference type="ProteomicsDB" id="6598"/>
<dbReference type="ProteomicsDB" id="69052"/>
<dbReference type="Antibodypedia" id="34186">
    <property type="antibodies" value="258 antibodies from 28 providers"/>
</dbReference>
<dbReference type="DNASU" id="8609"/>
<dbReference type="Ensembl" id="ENST00000309446.11">
    <molecule id="O75840-1"/>
    <property type="protein sequence ID" value="ENSP00000309570.6"/>
    <property type="gene ID" value="ENSG00000118263.16"/>
</dbReference>
<dbReference type="Ensembl" id="ENST00000421199.5">
    <molecule id="O75840-2"/>
    <property type="protein sequence ID" value="ENSP00000387510.1"/>
    <property type="gene ID" value="ENSG00000118263.16"/>
</dbReference>
<dbReference type="Ensembl" id="ENST00000423015.5">
    <molecule id="O75840-3"/>
    <property type="protein sequence ID" value="ENSP00000398572.1"/>
    <property type="gene ID" value="ENSG00000118263.16"/>
</dbReference>
<dbReference type="Ensembl" id="ENST00000435602.2">
    <molecule id="O75840-4"/>
    <property type="protein sequence ID" value="ENSP00000413590.2"/>
    <property type="gene ID" value="ENSG00000118263.16"/>
</dbReference>
<dbReference type="Ensembl" id="ENST00000458272.2">
    <molecule id="O75840-5"/>
    <property type="protein sequence ID" value="ENSP00000393268.1"/>
    <property type="gene ID" value="ENSG00000118263.16"/>
</dbReference>
<dbReference type="Ensembl" id="ENST00000703734.1">
    <molecule id="O75840-3"/>
    <property type="protein sequence ID" value="ENSP00000515454.1"/>
    <property type="gene ID" value="ENSG00000118263.16"/>
</dbReference>
<dbReference type="GeneID" id="8609"/>
<dbReference type="KEGG" id="hsa:8609"/>
<dbReference type="MANE-Select" id="ENST00000309446.11">
    <property type="protein sequence ID" value="ENSP00000309570.6"/>
    <property type="RefSeq nucleotide sequence ID" value="NM_003709.4"/>
    <property type="RefSeq protein sequence ID" value="NP_003700.1"/>
</dbReference>
<dbReference type="UCSC" id="uc002vbz.3">
    <molecule id="O75840-1"/>
    <property type="organism name" value="human"/>
</dbReference>
<dbReference type="AGR" id="HGNC:6350"/>
<dbReference type="CTD" id="8609"/>
<dbReference type="DisGeNET" id="8609"/>
<dbReference type="GeneCards" id="KLF7"/>
<dbReference type="HGNC" id="HGNC:6350">
    <property type="gene designation" value="KLF7"/>
</dbReference>
<dbReference type="HPA" id="ENSG00000118263">
    <property type="expression patterns" value="Low tissue specificity"/>
</dbReference>
<dbReference type="MIM" id="604865">
    <property type="type" value="gene"/>
</dbReference>
<dbReference type="neXtProt" id="NX_O75840"/>
<dbReference type="OpenTargets" id="ENSG00000118263"/>
<dbReference type="PharmGKB" id="PA30140"/>
<dbReference type="VEuPathDB" id="HostDB:ENSG00000118263"/>
<dbReference type="eggNOG" id="KOG1721">
    <property type="taxonomic scope" value="Eukaryota"/>
</dbReference>
<dbReference type="GeneTree" id="ENSGT00940000155235"/>
<dbReference type="HOGENOM" id="CLU_002678_33_4_1"/>
<dbReference type="InParanoid" id="O75840"/>
<dbReference type="OMA" id="DCFLHAA"/>
<dbReference type="OrthoDB" id="4748970at2759"/>
<dbReference type="PAN-GO" id="O75840">
    <property type="GO annotations" value="3 GO annotations based on evolutionary models"/>
</dbReference>
<dbReference type="PhylomeDB" id="O75840"/>
<dbReference type="TreeFam" id="TF350556"/>
<dbReference type="PathwayCommons" id="O75840"/>
<dbReference type="SignaLink" id="O75840"/>
<dbReference type="SIGNOR" id="O75840"/>
<dbReference type="BioGRID-ORCS" id="8609">
    <property type="hits" value="89 hits in 1165 CRISPR screens"/>
</dbReference>
<dbReference type="ChiTaRS" id="KLF7">
    <property type="organism name" value="human"/>
</dbReference>
<dbReference type="GeneWiki" id="KLF7"/>
<dbReference type="GenomeRNAi" id="8609"/>
<dbReference type="Pharos" id="O75840">
    <property type="development level" value="Tbio"/>
</dbReference>
<dbReference type="PRO" id="PR:O75840"/>
<dbReference type="Proteomes" id="UP000005640">
    <property type="component" value="Chromosome 2"/>
</dbReference>
<dbReference type="RNAct" id="O75840">
    <property type="molecule type" value="protein"/>
</dbReference>
<dbReference type="Bgee" id="ENSG00000118263">
    <property type="expression patterns" value="Expressed in buccal mucosa cell and 204 other cell types or tissues"/>
</dbReference>
<dbReference type="ExpressionAtlas" id="O75840">
    <property type="expression patterns" value="baseline and differential"/>
</dbReference>
<dbReference type="GO" id="GO:0000785">
    <property type="term" value="C:chromatin"/>
    <property type="evidence" value="ECO:0000247"/>
    <property type="project" value="NTNU_SB"/>
</dbReference>
<dbReference type="GO" id="GO:0005829">
    <property type="term" value="C:cytosol"/>
    <property type="evidence" value="ECO:0000314"/>
    <property type="project" value="HPA"/>
</dbReference>
<dbReference type="GO" id="GO:0005654">
    <property type="term" value="C:nucleoplasm"/>
    <property type="evidence" value="ECO:0000314"/>
    <property type="project" value="HPA"/>
</dbReference>
<dbReference type="GO" id="GO:0005634">
    <property type="term" value="C:nucleus"/>
    <property type="evidence" value="ECO:0000314"/>
    <property type="project" value="UniProtKB"/>
</dbReference>
<dbReference type="GO" id="GO:0001228">
    <property type="term" value="F:DNA-binding transcription activator activity, RNA polymerase II-specific"/>
    <property type="evidence" value="ECO:0000314"/>
    <property type="project" value="NTNU_SB"/>
</dbReference>
<dbReference type="GO" id="GO:0000981">
    <property type="term" value="F:DNA-binding transcription factor activity, RNA polymerase II-specific"/>
    <property type="evidence" value="ECO:0000314"/>
    <property type="project" value="UniProtKB"/>
</dbReference>
<dbReference type="GO" id="GO:0000978">
    <property type="term" value="F:RNA polymerase II cis-regulatory region sequence-specific DNA binding"/>
    <property type="evidence" value="ECO:0000314"/>
    <property type="project" value="NTNU_SB"/>
</dbReference>
<dbReference type="GO" id="GO:0008270">
    <property type="term" value="F:zinc ion binding"/>
    <property type="evidence" value="ECO:0000304"/>
    <property type="project" value="ProtInc"/>
</dbReference>
<dbReference type="GO" id="GO:0007411">
    <property type="term" value="P:axon guidance"/>
    <property type="evidence" value="ECO:0000250"/>
    <property type="project" value="UniProtKB"/>
</dbReference>
<dbReference type="GO" id="GO:0007409">
    <property type="term" value="P:axonogenesis"/>
    <property type="evidence" value="ECO:0000250"/>
    <property type="project" value="UniProtKB"/>
</dbReference>
<dbReference type="GO" id="GO:0048813">
    <property type="term" value="P:dendrite morphogenesis"/>
    <property type="evidence" value="ECO:0000250"/>
    <property type="project" value="UniProtKB"/>
</dbReference>
<dbReference type="GO" id="GO:0042593">
    <property type="term" value="P:glucose homeostasis"/>
    <property type="evidence" value="ECO:0000315"/>
    <property type="project" value="UniProtKB"/>
</dbReference>
<dbReference type="GO" id="GO:1904178">
    <property type="term" value="P:negative regulation of adipose tissue development"/>
    <property type="evidence" value="ECO:0000315"/>
    <property type="project" value="UniProtKB"/>
</dbReference>
<dbReference type="GO" id="GO:0061179">
    <property type="term" value="P:negative regulation of insulin secretion involved in cellular response to glucose stimulus"/>
    <property type="evidence" value="ECO:0000315"/>
    <property type="project" value="UniProtKB"/>
</dbReference>
<dbReference type="GO" id="GO:0000122">
    <property type="term" value="P:negative regulation of transcription by RNA polymerase II"/>
    <property type="evidence" value="ECO:0000315"/>
    <property type="project" value="UniProtKB"/>
</dbReference>
<dbReference type="GO" id="GO:0045944">
    <property type="term" value="P:positive regulation of transcription by RNA polymerase II"/>
    <property type="evidence" value="ECO:0000314"/>
    <property type="project" value="NTNU_SB"/>
</dbReference>
<dbReference type="GO" id="GO:0045604">
    <property type="term" value="P:regulation of epidermal cell differentiation"/>
    <property type="evidence" value="ECO:0000315"/>
    <property type="project" value="UniProtKB"/>
</dbReference>
<dbReference type="GO" id="GO:0006357">
    <property type="term" value="P:regulation of transcription by RNA polymerase II"/>
    <property type="evidence" value="ECO:0000318"/>
    <property type="project" value="GO_Central"/>
</dbReference>
<dbReference type="CDD" id="cd21585">
    <property type="entry name" value="KLF7_N"/>
    <property type="match status" value="1"/>
</dbReference>
<dbReference type="FunFam" id="3.30.160.60:FF:000021">
    <property type="entry name" value="Basic krueppel-like factor 3"/>
    <property type="match status" value="1"/>
</dbReference>
<dbReference type="FunFam" id="3.30.160.60:FF:001395">
    <property type="entry name" value="Krueppel-like factor 7"/>
    <property type="match status" value="1"/>
</dbReference>
<dbReference type="FunFam" id="3.30.160.60:FF:000624">
    <property type="entry name" value="zinc finger protein 697"/>
    <property type="match status" value="1"/>
</dbReference>
<dbReference type="Gene3D" id="3.30.160.60">
    <property type="entry name" value="Classic Zinc Finger"/>
    <property type="match status" value="3"/>
</dbReference>
<dbReference type="InterPro" id="IPR036236">
    <property type="entry name" value="Znf_C2H2_sf"/>
</dbReference>
<dbReference type="InterPro" id="IPR013087">
    <property type="entry name" value="Znf_C2H2_type"/>
</dbReference>
<dbReference type="PANTHER" id="PTHR23235:SF77">
    <property type="entry name" value="KRUEPPEL-LIKE FACTOR 7"/>
    <property type="match status" value="1"/>
</dbReference>
<dbReference type="PANTHER" id="PTHR23235">
    <property type="entry name" value="KRUEPPEL-LIKE TRANSCRIPTION FACTOR"/>
    <property type="match status" value="1"/>
</dbReference>
<dbReference type="Pfam" id="PF00096">
    <property type="entry name" value="zf-C2H2"/>
    <property type="match status" value="3"/>
</dbReference>
<dbReference type="SMART" id="SM00355">
    <property type="entry name" value="ZnF_C2H2"/>
    <property type="match status" value="3"/>
</dbReference>
<dbReference type="SUPFAM" id="SSF57667">
    <property type="entry name" value="beta-beta-alpha zinc fingers"/>
    <property type="match status" value="2"/>
</dbReference>
<dbReference type="PROSITE" id="PS00028">
    <property type="entry name" value="ZINC_FINGER_C2H2_1"/>
    <property type="match status" value="3"/>
</dbReference>
<dbReference type="PROSITE" id="PS50157">
    <property type="entry name" value="ZINC_FINGER_C2H2_2"/>
    <property type="match status" value="3"/>
</dbReference>
<keyword id="KW-0010">Activator</keyword>
<keyword id="KW-0025">Alternative splicing</keyword>
<keyword id="KW-0238">DNA-binding</keyword>
<keyword id="KW-0479">Metal-binding</keyword>
<keyword id="KW-0539">Nucleus</keyword>
<keyword id="KW-1267">Proteomics identification</keyword>
<keyword id="KW-1185">Reference proteome</keyword>
<keyword id="KW-0677">Repeat</keyword>
<keyword id="KW-0804">Transcription</keyword>
<keyword id="KW-0805">Transcription regulation</keyword>
<keyword id="KW-0862">Zinc</keyword>
<keyword id="KW-0863">Zinc-finger</keyword>
<organism>
    <name type="scientific">Homo sapiens</name>
    <name type="common">Human</name>
    <dbReference type="NCBI Taxonomy" id="9606"/>
    <lineage>
        <taxon>Eukaryota</taxon>
        <taxon>Metazoa</taxon>
        <taxon>Chordata</taxon>
        <taxon>Craniata</taxon>
        <taxon>Vertebrata</taxon>
        <taxon>Euteleostomi</taxon>
        <taxon>Mammalia</taxon>
        <taxon>Eutheria</taxon>
        <taxon>Euarchontoglires</taxon>
        <taxon>Primates</taxon>
        <taxon>Haplorrhini</taxon>
        <taxon>Catarrhini</taxon>
        <taxon>Hominidae</taxon>
        <taxon>Homo</taxon>
    </lineage>
</organism>
<name>KLF7_HUMAN</name>
<feature type="chain" id="PRO_0000047174" description="Krueppel-like factor 7">
    <location>
        <begin position="1"/>
        <end position="302"/>
    </location>
</feature>
<feature type="zinc finger region" description="C2H2-type 1" evidence="3">
    <location>
        <begin position="219"/>
        <end position="243"/>
    </location>
</feature>
<feature type="zinc finger region" description="C2H2-type 2" evidence="3">
    <location>
        <begin position="249"/>
        <end position="273"/>
    </location>
</feature>
<feature type="zinc finger region" description="C2H2-type 3" evidence="3">
    <location>
        <begin position="279"/>
        <end position="301"/>
    </location>
</feature>
<feature type="short sequence motif" description="9aaTAD; inactive" evidence="7">
    <location>
        <begin position="93"/>
        <end position="101"/>
    </location>
</feature>
<feature type="short sequence motif" description="Nuclear localization signal" evidence="2">
    <location>
        <begin position="215"/>
        <end position="220"/>
    </location>
</feature>
<feature type="splice variant" id="VSP_047030" description="In isoform 2." evidence="9">
    <original>MDVLASYSIFQELQLVHDTGYFSALPSLEETWQQ</original>
    <variation>M</variation>
    <location>
        <begin position="1"/>
        <end position="34"/>
    </location>
</feature>
<feature type="splice variant" id="VSP_047031" description="In isoform 4." evidence="10">
    <original>MDVLASYSIFQELQLVHDTGYFSALPSLEETWQQ</original>
    <variation>MFPSWP</variation>
    <location>
        <begin position="1"/>
        <end position="34"/>
    </location>
</feature>
<feature type="splice variant" id="VSP_047477" description="In isoform 6." evidence="12">
    <original>TCLELERYLQTEPRRISETFGEDLDCFLHASPPPCIEESFRRLDPLLLPVEAA</original>
    <variation>VRSLISAHGRDVSGVLHEAMSSRGTTGNTQVQSPSNATTATGVFPGLTILPST</variation>
    <location>
        <begin position="35"/>
        <end position="87"/>
    </location>
</feature>
<feature type="splice variant" id="VSP_047478" description="In isoform 5." evidence="12">
    <location>
        <begin position="55"/>
        <end position="244"/>
    </location>
</feature>
<feature type="splice variant" id="VSP_047479" description="In isoform 6." evidence="12">
    <location>
        <begin position="88"/>
        <end position="302"/>
    </location>
</feature>
<feature type="splice variant" id="VSP_047032" description="In isoform 3." evidence="11">
    <original>GGVATAAAAVTAAGAVKSGQSDSDQGGLGAEACPENKKRVHRCQFNGCRKVYTKSSHLKAHQRTHTGEKPYKCSWEGCEWRFARSDELTRHYRKHTGAKPFKCNHCDRCFSRSDHLALHMKRHI</original>
    <variation>RSLISAHGRDVSGVLHEAMSSRGTTGNTQVQSPSNATTATGVFPGLTILPST</variation>
    <location>
        <begin position="179"/>
        <end position="302"/>
    </location>
</feature>
<feature type="sequence variant" id="VAR_081574" description="Found in two patients with developmental delay/intellectual disability, neuromuscular and psychiatric symptoms; uncertain significance; dbSNP:rs1276619385." evidence="6">
    <original>T</original>
    <variation>M</variation>
    <location>
        <position position="137"/>
    </location>
</feature>
<feature type="sequence variant" id="VAR_081575" description="Found in a patient with developmental delay/intellectual disability, neuromuscular and psychiatric symptoms; uncertain significance." evidence="6">
    <original>P</original>
    <variation>S</variation>
    <location>
        <position position="139"/>
    </location>
</feature>
<feature type="sequence variant" id="VAR_081576" description="Found in a patient with developmental delay/intellectual disability, neuromuscular and psychiatric symptoms; uncertain significance; dbSNP:rs1057518995." evidence="6">
    <original>D</original>
    <variation>N</variation>
    <location>
        <position position="264"/>
    </location>
</feature>
<reference key="1">
    <citation type="journal article" date="1998" name="J. Biol. Chem.">
        <title>Cloning the cDNA for a new human zinc finger protein defines a group of closely related Krueppel-like transcription factors.</title>
        <authorList>
            <person name="Matsumoto N."/>
            <person name="Laub F."/>
            <person name="Aldabe R."/>
            <person name="Zhang W."/>
            <person name="Ramirez F."/>
            <person name="Yoshida T."/>
            <person name="Terada M."/>
        </authorList>
    </citation>
    <scope>NUCLEOTIDE SEQUENCE [MRNA] (ISOFORM 1)</scope>
    <scope>TISSUE SPECIFICITY</scope>
    <scope>SUBCELLULAR LOCATION</scope>
    <scope>FUNCTION</scope>
    <source>
        <tissue>Brain</tissue>
    </source>
</reference>
<reference key="2">
    <citation type="journal article" date="2013" name="FASEB J.">
        <title>Shaking the family tree: Identification of novel and biologically active alternatively spliced isoforms across the KLF family of transcription factors.</title>
        <authorList>
            <person name="Camacho-Vanegas O."/>
            <person name="Till J."/>
            <person name="Miranda-Lorenzo I."/>
            <person name="Ozturk B."/>
            <person name="Camacho S.C."/>
            <person name="Martignetti J.A."/>
        </authorList>
    </citation>
    <scope>NUCLEOTIDE SEQUENCE [MRNA] (ISOFORMS 5 AND 6)</scope>
    <scope>ALTERNATIVE SPLICING</scope>
</reference>
<reference key="3">
    <citation type="journal article" date="2001" name="Genome Res.">
        <title>Towards a catalog of human genes and proteins: sequencing and analysis of 500 novel complete protein coding human cDNAs.</title>
        <authorList>
            <person name="Wiemann S."/>
            <person name="Weil B."/>
            <person name="Wellenreuther R."/>
            <person name="Gassenhuber J."/>
            <person name="Glassl S."/>
            <person name="Ansorge W."/>
            <person name="Boecher M."/>
            <person name="Bloecker H."/>
            <person name="Bauersachs S."/>
            <person name="Blum H."/>
            <person name="Lauber J."/>
            <person name="Duesterhoeft A."/>
            <person name="Beyer A."/>
            <person name="Koehrer K."/>
            <person name="Strack N."/>
            <person name="Mewes H.-W."/>
            <person name="Ottenwaelder B."/>
            <person name="Obermaier B."/>
            <person name="Tampe J."/>
            <person name="Heubner D."/>
            <person name="Wambutt R."/>
            <person name="Korn B."/>
            <person name="Klein M."/>
            <person name="Poustka A."/>
        </authorList>
    </citation>
    <scope>NUCLEOTIDE SEQUENCE [LARGE SCALE MRNA] (ISOFORM 2)</scope>
    <source>
        <tissue>Heart</tissue>
    </source>
</reference>
<reference key="4">
    <citation type="submission" date="2004-06" db="EMBL/GenBank/DDBJ databases">
        <title>Cloning of human full open reading frames in Gateway(TM) system entry vector (pDONR201).</title>
        <authorList>
            <person name="Halleck A."/>
            <person name="Ebert L."/>
            <person name="Mkoundinya M."/>
            <person name="Schick M."/>
            <person name="Eisenstein S."/>
            <person name="Neubert P."/>
            <person name="Kstrang K."/>
            <person name="Schatten R."/>
            <person name="Shen B."/>
            <person name="Henze S."/>
            <person name="Mar W."/>
            <person name="Korn B."/>
            <person name="Zuo D."/>
            <person name="Hu Y."/>
            <person name="LaBaer J."/>
        </authorList>
    </citation>
    <scope>NUCLEOTIDE SEQUENCE [LARGE SCALE MRNA] (ISOFORM 1)</scope>
</reference>
<reference key="5">
    <citation type="journal article" date="2004" name="Nat. Genet.">
        <title>Complete sequencing and characterization of 21,243 full-length human cDNAs.</title>
        <authorList>
            <person name="Ota T."/>
            <person name="Suzuki Y."/>
            <person name="Nishikawa T."/>
            <person name="Otsuki T."/>
            <person name="Sugiyama T."/>
            <person name="Irie R."/>
            <person name="Wakamatsu A."/>
            <person name="Hayashi K."/>
            <person name="Sato H."/>
            <person name="Nagai K."/>
            <person name="Kimura K."/>
            <person name="Makita H."/>
            <person name="Sekine M."/>
            <person name="Obayashi M."/>
            <person name="Nishi T."/>
            <person name="Shibahara T."/>
            <person name="Tanaka T."/>
            <person name="Ishii S."/>
            <person name="Yamamoto J."/>
            <person name="Saito K."/>
            <person name="Kawai Y."/>
            <person name="Isono Y."/>
            <person name="Nakamura Y."/>
            <person name="Nagahari K."/>
            <person name="Murakami K."/>
            <person name="Yasuda T."/>
            <person name="Iwayanagi T."/>
            <person name="Wagatsuma M."/>
            <person name="Shiratori A."/>
            <person name="Sudo H."/>
            <person name="Hosoiri T."/>
            <person name="Kaku Y."/>
            <person name="Kodaira H."/>
            <person name="Kondo H."/>
            <person name="Sugawara M."/>
            <person name="Takahashi M."/>
            <person name="Kanda K."/>
            <person name="Yokoi T."/>
            <person name="Furuya T."/>
            <person name="Kikkawa E."/>
            <person name="Omura Y."/>
            <person name="Abe K."/>
            <person name="Kamihara K."/>
            <person name="Katsuta N."/>
            <person name="Sato K."/>
            <person name="Tanikawa M."/>
            <person name="Yamazaki M."/>
            <person name="Ninomiya K."/>
            <person name="Ishibashi T."/>
            <person name="Yamashita H."/>
            <person name="Murakawa K."/>
            <person name="Fujimori K."/>
            <person name="Tanai H."/>
            <person name="Kimata M."/>
            <person name="Watanabe M."/>
            <person name="Hiraoka S."/>
            <person name="Chiba Y."/>
            <person name="Ishida S."/>
            <person name="Ono Y."/>
            <person name="Takiguchi S."/>
            <person name="Watanabe S."/>
            <person name="Yosida M."/>
            <person name="Hotuta T."/>
            <person name="Kusano J."/>
            <person name="Kanehori K."/>
            <person name="Takahashi-Fujii A."/>
            <person name="Hara H."/>
            <person name="Tanase T.-O."/>
            <person name="Nomura Y."/>
            <person name="Togiya S."/>
            <person name="Komai F."/>
            <person name="Hara R."/>
            <person name="Takeuchi K."/>
            <person name="Arita M."/>
            <person name="Imose N."/>
            <person name="Musashino K."/>
            <person name="Yuuki H."/>
            <person name="Oshima A."/>
            <person name="Sasaki N."/>
            <person name="Aotsuka S."/>
            <person name="Yoshikawa Y."/>
            <person name="Matsunawa H."/>
            <person name="Ichihara T."/>
            <person name="Shiohata N."/>
            <person name="Sano S."/>
            <person name="Moriya S."/>
            <person name="Momiyama H."/>
            <person name="Satoh N."/>
            <person name="Takami S."/>
            <person name="Terashima Y."/>
            <person name="Suzuki O."/>
            <person name="Nakagawa S."/>
            <person name="Senoh A."/>
            <person name="Mizoguchi H."/>
            <person name="Goto Y."/>
            <person name="Shimizu F."/>
            <person name="Wakebe H."/>
            <person name="Hishigaki H."/>
            <person name="Watanabe T."/>
            <person name="Sugiyama A."/>
            <person name="Takemoto M."/>
            <person name="Kawakami B."/>
            <person name="Yamazaki M."/>
            <person name="Watanabe K."/>
            <person name="Kumagai A."/>
            <person name="Itakura S."/>
            <person name="Fukuzumi Y."/>
            <person name="Fujimori Y."/>
            <person name="Komiyama M."/>
            <person name="Tashiro H."/>
            <person name="Tanigami A."/>
            <person name="Fujiwara T."/>
            <person name="Ono T."/>
            <person name="Yamada K."/>
            <person name="Fujii Y."/>
            <person name="Ozaki K."/>
            <person name="Hirao M."/>
            <person name="Ohmori Y."/>
            <person name="Kawabata A."/>
            <person name="Hikiji T."/>
            <person name="Kobatake N."/>
            <person name="Inagaki H."/>
            <person name="Ikema Y."/>
            <person name="Okamoto S."/>
            <person name="Okitani R."/>
            <person name="Kawakami T."/>
            <person name="Noguchi S."/>
            <person name="Itoh T."/>
            <person name="Shigeta K."/>
            <person name="Senba T."/>
            <person name="Matsumura K."/>
            <person name="Nakajima Y."/>
            <person name="Mizuno T."/>
            <person name="Morinaga M."/>
            <person name="Sasaki M."/>
            <person name="Togashi T."/>
            <person name="Oyama M."/>
            <person name="Hata H."/>
            <person name="Watanabe M."/>
            <person name="Komatsu T."/>
            <person name="Mizushima-Sugano J."/>
            <person name="Satoh T."/>
            <person name="Shirai Y."/>
            <person name="Takahashi Y."/>
            <person name="Nakagawa K."/>
            <person name="Okumura K."/>
            <person name="Nagase T."/>
            <person name="Nomura N."/>
            <person name="Kikuchi H."/>
            <person name="Masuho Y."/>
            <person name="Yamashita R."/>
            <person name="Nakai K."/>
            <person name="Yada T."/>
            <person name="Nakamura Y."/>
            <person name="Ohara O."/>
            <person name="Isogai T."/>
            <person name="Sugano S."/>
        </authorList>
    </citation>
    <scope>NUCLEOTIDE SEQUENCE [LARGE SCALE MRNA] (ISOFORMS 1 AND 4)</scope>
    <source>
        <tissue>Placenta</tissue>
    </source>
</reference>
<reference key="6">
    <citation type="journal article" date="2005" name="Nature">
        <title>Generation and annotation of the DNA sequences of human chromosomes 2 and 4.</title>
        <authorList>
            <person name="Hillier L.W."/>
            <person name="Graves T.A."/>
            <person name="Fulton R.S."/>
            <person name="Fulton L.A."/>
            <person name="Pepin K.H."/>
            <person name="Minx P."/>
            <person name="Wagner-McPherson C."/>
            <person name="Layman D."/>
            <person name="Wylie K."/>
            <person name="Sekhon M."/>
            <person name="Becker M.C."/>
            <person name="Fewell G.A."/>
            <person name="Delehaunty K.D."/>
            <person name="Miner T.L."/>
            <person name="Nash W.E."/>
            <person name="Kremitzki C."/>
            <person name="Oddy L."/>
            <person name="Du H."/>
            <person name="Sun H."/>
            <person name="Bradshaw-Cordum H."/>
            <person name="Ali J."/>
            <person name="Carter J."/>
            <person name="Cordes M."/>
            <person name="Harris A."/>
            <person name="Isak A."/>
            <person name="van Brunt A."/>
            <person name="Nguyen C."/>
            <person name="Du F."/>
            <person name="Courtney L."/>
            <person name="Kalicki J."/>
            <person name="Ozersky P."/>
            <person name="Abbott S."/>
            <person name="Armstrong J."/>
            <person name="Belter E.A."/>
            <person name="Caruso L."/>
            <person name="Cedroni M."/>
            <person name="Cotton M."/>
            <person name="Davidson T."/>
            <person name="Desai A."/>
            <person name="Elliott G."/>
            <person name="Erb T."/>
            <person name="Fronick C."/>
            <person name="Gaige T."/>
            <person name="Haakenson W."/>
            <person name="Haglund K."/>
            <person name="Holmes A."/>
            <person name="Harkins R."/>
            <person name="Kim K."/>
            <person name="Kruchowski S.S."/>
            <person name="Strong C.M."/>
            <person name="Grewal N."/>
            <person name="Goyea E."/>
            <person name="Hou S."/>
            <person name="Levy A."/>
            <person name="Martinka S."/>
            <person name="Mead K."/>
            <person name="McLellan M.D."/>
            <person name="Meyer R."/>
            <person name="Randall-Maher J."/>
            <person name="Tomlinson C."/>
            <person name="Dauphin-Kohlberg S."/>
            <person name="Kozlowicz-Reilly A."/>
            <person name="Shah N."/>
            <person name="Swearengen-Shahid S."/>
            <person name="Snider J."/>
            <person name="Strong J.T."/>
            <person name="Thompson J."/>
            <person name="Yoakum M."/>
            <person name="Leonard S."/>
            <person name="Pearman C."/>
            <person name="Trani L."/>
            <person name="Radionenko M."/>
            <person name="Waligorski J.E."/>
            <person name="Wang C."/>
            <person name="Rock S.M."/>
            <person name="Tin-Wollam A.-M."/>
            <person name="Maupin R."/>
            <person name="Latreille P."/>
            <person name="Wendl M.C."/>
            <person name="Yang S.-P."/>
            <person name="Pohl C."/>
            <person name="Wallis J.W."/>
            <person name="Spieth J."/>
            <person name="Bieri T.A."/>
            <person name="Berkowicz N."/>
            <person name="Nelson J.O."/>
            <person name="Osborne J."/>
            <person name="Ding L."/>
            <person name="Meyer R."/>
            <person name="Sabo A."/>
            <person name="Shotland Y."/>
            <person name="Sinha P."/>
            <person name="Wohldmann P.E."/>
            <person name="Cook L.L."/>
            <person name="Hickenbotham M.T."/>
            <person name="Eldred J."/>
            <person name="Williams D."/>
            <person name="Jones T.A."/>
            <person name="She X."/>
            <person name="Ciccarelli F.D."/>
            <person name="Izaurralde E."/>
            <person name="Taylor J."/>
            <person name="Schmutz J."/>
            <person name="Myers R.M."/>
            <person name="Cox D.R."/>
            <person name="Huang X."/>
            <person name="McPherson J.D."/>
            <person name="Mardis E.R."/>
            <person name="Clifton S.W."/>
            <person name="Warren W.C."/>
            <person name="Chinwalla A.T."/>
            <person name="Eddy S.R."/>
            <person name="Marra M.A."/>
            <person name="Ovcharenko I."/>
            <person name="Furey T.S."/>
            <person name="Miller W."/>
            <person name="Eichler E.E."/>
            <person name="Bork P."/>
            <person name="Suyama M."/>
            <person name="Torrents D."/>
            <person name="Waterston R.H."/>
            <person name="Wilson R.K."/>
        </authorList>
    </citation>
    <scope>NUCLEOTIDE SEQUENCE [LARGE SCALE GENOMIC DNA]</scope>
</reference>
<reference key="7">
    <citation type="submission" date="2005-07" db="EMBL/GenBank/DDBJ databases">
        <authorList>
            <person name="Mural R.J."/>
            <person name="Istrail S."/>
            <person name="Sutton G.G."/>
            <person name="Florea L."/>
            <person name="Halpern A.L."/>
            <person name="Mobarry C.M."/>
            <person name="Lippert R."/>
            <person name="Walenz B."/>
            <person name="Shatkay H."/>
            <person name="Dew I."/>
            <person name="Miller J.R."/>
            <person name="Flanigan M.J."/>
            <person name="Edwards N.J."/>
            <person name="Bolanos R."/>
            <person name="Fasulo D."/>
            <person name="Halldorsson B.V."/>
            <person name="Hannenhalli S."/>
            <person name="Turner R."/>
            <person name="Yooseph S."/>
            <person name="Lu F."/>
            <person name="Nusskern D.R."/>
            <person name="Shue B.C."/>
            <person name="Zheng X.H."/>
            <person name="Zhong F."/>
            <person name="Delcher A.L."/>
            <person name="Huson D.H."/>
            <person name="Kravitz S.A."/>
            <person name="Mouchard L."/>
            <person name="Reinert K."/>
            <person name="Remington K.A."/>
            <person name="Clark A.G."/>
            <person name="Waterman M.S."/>
            <person name="Eichler E.E."/>
            <person name="Adams M.D."/>
            <person name="Hunkapiller M.W."/>
            <person name="Myers E.W."/>
            <person name="Venter J.C."/>
        </authorList>
    </citation>
    <scope>NUCLEOTIDE SEQUENCE [LARGE SCALE GENOMIC DNA]</scope>
</reference>
<reference key="8">
    <citation type="journal article" date="2004" name="Genome Res.">
        <title>The status, quality, and expansion of the NIH full-length cDNA project: the Mammalian Gene Collection (MGC).</title>
        <authorList>
            <consortium name="The MGC Project Team"/>
        </authorList>
    </citation>
    <scope>NUCLEOTIDE SEQUENCE [LARGE SCALE MRNA] (ISOFORM 3)</scope>
    <source>
        <tissue>Testis</tissue>
    </source>
</reference>
<reference key="9">
    <citation type="journal article" date="2006" name="Mol. Endocrinol.">
        <title>Overexpression of Kruppel-like factor 7 regulates adipocytokine gene expressions in human adipocytes and inhibits glucose-induced insulin secretion in pancreatic beta-cell line.</title>
        <authorList>
            <person name="Kawamura Y."/>
            <person name="Tanaka Y."/>
            <person name="Kawamori R."/>
            <person name="Maeda S."/>
        </authorList>
    </citation>
    <scope>FUNCTION</scope>
    <scope>TISSUE SPECIFICITY</scope>
</reference>
<reference key="10">
    <citation type="journal article" date="2017" name="J. Biol. Chem.">
        <title>Characterization of enhancers and the role of the transcription factor KLF7 in regulating corneal epithelial differentiation.</title>
        <authorList>
            <person name="Klein R.H."/>
            <person name="Hu W."/>
            <person name="Kashgari G."/>
            <person name="Lin Z."/>
            <person name="Nguyen T."/>
            <person name="Doan M."/>
            <person name="Andersen B."/>
        </authorList>
    </citation>
    <scope>TISSUE SPECIFICITY</scope>
    <scope>FUNCTION</scope>
</reference>
<reference key="11">
    <citation type="journal article" date="2020" name="Cell. Mol. Life Sci.">
        <title>The evolution of the 9aaTAD domain in Sp2 proteins: inactivation with valines and intron reservoirs.</title>
        <authorList>
            <person name="Piskacek M."/>
            <person name="Havelka M."/>
            <person name="Jendruchova K."/>
            <person name="Knight A."/>
            <person name="Keegan L.P."/>
        </authorList>
    </citation>
    <scope>INACTIVATION OF 9AATAD MOTIF</scope>
</reference>
<reference key="12">
    <citation type="journal article" date="2018" name="Clin. Genet.">
        <title>De novo variants in KLF7 are a potential novel cause of developmental delay/intellectual disability, neuromuscular and psychiatric symptoms.</title>
        <authorList>
            <person name="Powis Z."/>
            <person name="Petrik I."/>
            <person name="Cohen J.S."/>
            <person name="Escolar D."/>
            <person name="Burton J."/>
            <person name="van Ravenswaaij-Arts C.M.A."/>
            <person name="Sival D.A."/>
            <person name="Stegmann A.P.A."/>
            <person name="Kleefstra T."/>
            <person name="Pfundt R."/>
            <person name="Chikarmane R."/>
            <person name="Begtrup A."/>
            <person name="Huether R."/>
            <person name="Tang S."/>
            <person name="Shinde D.N."/>
        </authorList>
    </citation>
    <scope>VARIANTS MET-137; SER-139 AND ASN-264</scope>
</reference>
<proteinExistence type="evidence at protein level"/>